<dbReference type="EMBL" id="X04798">
    <property type="protein sequence ID" value="CAA28490.1"/>
    <property type="molecule type" value="Genomic_DNA"/>
</dbReference>
<dbReference type="EMBL" id="Z86099">
    <property type="protein sequence ID" value="CAB06711.1"/>
    <property type="molecule type" value="Genomic_DNA"/>
</dbReference>
<dbReference type="PIR" id="C43674">
    <property type="entry name" value="C43674"/>
</dbReference>
<dbReference type="RefSeq" id="YP_009137216.1">
    <property type="nucleotide sequence ID" value="NC_001798.2"/>
</dbReference>
<dbReference type="GlyConnect" id="171">
    <property type="glycosylation" value="3 O-Linked glycans"/>
</dbReference>
<dbReference type="GlyCosmos" id="P13290">
    <property type="glycosylation" value="4 sites, 6 glycans"/>
</dbReference>
<dbReference type="DNASU" id="1487356"/>
<dbReference type="GeneID" id="1487356"/>
<dbReference type="KEGG" id="vg:1487356"/>
<dbReference type="Proteomes" id="UP000001874">
    <property type="component" value="Segment"/>
</dbReference>
<dbReference type="GO" id="GO:0016020">
    <property type="term" value="C:membrane"/>
    <property type="evidence" value="ECO:0007669"/>
    <property type="project" value="UniProtKB-KW"/>
</dbReference>
<dbReference type="GO" id="GO:0019031">
    <property type="term" value="C:viral envelope"/>
    <property type="evidence" value="ECO:0007669"/>
    <property type="project" value="UniProtKB-KW"/>
</dbReference>
<dbReference type="GO" id="GO:0055036">
    <property type="term" value="C:virion membrane"/>
    <property type="evidence" value="ECO:0007669"/>
    <property type="project" value="UniProtKB-SubCell"/>
</dbReference>
<dbReference type="InterPro" id="IPR002896">
    <property type="entry name" value="Herpes_glycop_dom"/>
</dbReference>
<dbReference type="InterPro" id="IPR036179">
    <property type="entry name" value="Ig-like_dom_sf"/>
</dbReference>
<dbReference type="Pfam" id="PF01537">
    <property type="entry name" value="Herpes_glycop_D"/>
    <property type="match status" value="1"/>
</dbReference>
<dbReference type="SUPFAM" id="SSF48726">
    <property type="entry name" value="Immunoglobulin"/>
    <property type="match status" value="1"/>
</dbReference>
<comment type="function">
    <text evidence="1">Chemokine-binding protein that inhibits neutrophils' chemotaxis.</text>
</comment>
<comment type="subcellular location">
    <subcellularLocation>
        <location evidence="4">Virion membrane</location>
        <topology evidence="4">Single-pass type I membrane protein</topology>
    </subcellularLocation>
</comment>
<comment type="miscellaneous">
    <text>Glycoprotein G is much larger in HSV-2 than in HSV-1.</text>
</comment>
<comment type="similarity">
    <text evidence="4">Belongs to the alphaherpesvirinae glycoprotein G family.</text>
</comment>
<protein>
    <recommendedName>
        <fullName>Envelope glycoprotein G</fullName>
        <shortName>gG</shortName>
    </recommendedName>
    <alternativeName>
        <fullName>gG-2</fullName>
    </alternativeName>
</protein>
<sequence length="699" mass="72244">MHAIAPRLLLLFVLSGLPGTRGGSGVPGPINPPNSDVVFPGGSPVAQYCYAYPRLDDPGPLGSADAGRQDLPRRVVRHEPLGRSFLTGGLVLLAPPVRGFGAPNATYAARVTYYRLTRACRQPILLRQYGGCRGGEPPSPKTCGSYTYTYQGGGPPTRYALVNASLLVPIWDRAAETFEYQIELGGELHVGLLWVEVGGEGPGPTAPPQAARAEGGPCVPPVPAGRPWRSVPPVWYSAPNPGFRGLRFRERCLPPQTPAAPSDLPRVAFAPQSLLVGITGRTFIRMARPTEDVGVLPPHWAPGALDDGPYAPFPPRPRFRRALRTDPEGVDPDVRAPRTGRRLMALTEDTSSDSPTSAPEKTPLPVSATAMAPSVDPSAEPTAPATTTPPDEMATQAATVAVTPEETAVASPPATASVESSPLPAAAAATPGAGHTNTSSASAAKTPPTTPAPTTPPPTSTHATPRPTTPGPQTTPPGPATPGPVGASAAPTADSPLTASPPATAPGPSAANVSVAATTATPGTRGTARTPPTDPKTHPHGPADAPPGSPAPPPPEHRGGPEEFEGAGDGEPPEDDDSATGLAFRTPNPNKPPPARPGPIRPTLPPGILGPLAPNTPRPPAQAPAKDMPSGPTPQHIPLFWFLTASPALDILFIISTTIHTAAFVCLVALAAQLWRGRAGRRRYAHPSVRYVCLPPERD</sequence>
<evidence type="ECO:0000250" key="1"/>
<evidence type="ECO:0000255" key="2"/>
<evidence type="ECO:0000256" key="3">
    <source>
        <dbReference type="SAM" id="MobiDB-lite"/>
    </source>
</evidence>
<evidence type="ECO:0000305" key="4"/>
<reference key="1">
    <citation type="journal article" date="1987" name="J. Gen. Virol.">
        <title>DNA sequence and genetic content of the HindIII l region in the short unique component of the herpes simplex virus type 2 genome: identification of the gene encoding glycoprotein G, and evolutionary comparisons.</title>
        <authorList>
            <person name="McGeoch D.J."/>
            <person name="Moss H.W.M."/>
            <person name="McNab D."/>
            <person name="Frame M.C."/>
        </authorList>
    </citation>
    <scope>NUCLEOTIDE SEQUENCE [GENOMIC DNA]</scope>
</reference>
<reference key="2">
    <citation type="journal article" date="1998" name="J. Virol.">
        <title>The genome sequence of herpes simplex virus type 2.</title>
        <authorList>
            <person name="Dolan A."/>
            <person name="Jamieson F.E."/>
            <person name="Cunningham C."/>
            <person name="Barnett B.C."/>
            <person name="McGeoch D.J."/>
        </authorList>
    </citation>
    <scope>NUCLEOTIDE SEQUENCE [LARGE SCALE GENOMIC DNA]</scope>
</reference>
<accession>P13290</accession>
<name>GG_HHV2H</name>
<organism>
    <name type="scientific">Human herpesvirus 2 (strain HG52)</name>
    <name type="common">HHV-2</name>
    <name type="synonym">Human herpes simplex virus 2</name>
    <dbReference type="NCBI Taxonomy" id="10315"/>
    <lineage>
        <taxon>Viruses</taxon>
        <taxon>Duplodnaviria</taxon>
        <taxon>Heunggongvirae</taxon>
        <taxon>Peploviricota</taxon>
        <taxon>Herviviricetes</taxon>
        <taxon>Herpesvirales</taxon>
        <taxon>Orthoherpesviridae</taxon>
        <taxon>Alphaherpesvirinae</taxon>
        <taxon>Simplexvirus</taxon>
        <taxon>Simplexvirus humanalpha2</taxon>
        <taxon>Human herpesvirus 2</taxon>
    </lineage>
</organism>
<organismHost>
    <name type="scientific">Homo sapiens</name>
    <name type="common">Human</name>
    <dbReference type="NCBI Taxonomy" id="9606"/>
</organismHost>
<proteinExistence type="inferred from homology"/>
<feature type="signal peptide" evidence="2">
    <location>
        <begin position="1"/>
        <end position="22"/>
    </location>
</feature>
<feature type="chain" id="PRO_0000115769" description="Envelope glycoprotein G">
    <location>
        <begin position="23"/>
        <end position="699"/>
    </location>
</feature>
<feature type="topological domain" description="Virion surface" evidence="2">
    <location>
        <begin position="23"/>
        <end position="650"/>
    </location>
</feature>
<feature type="transmembrane region" description="Helical" evidence="2">
    <location>
        <begin position="651"/>
        <end position="671"/>
    </location>
</feature>
<feature type="topological domain" description="Intravirion" evidence="2">
    <location>
        <begin position="672"/>
        <end position="699"/>
    </location>
</feature>
<feature type="region of interest" description="Disordered" evidence="3">
    <location>
        <begin position="302"/>
        <end position="390"/>
    </location>
</feature>
<feature type="region of interest" description="Disordered" evidence="3">
    <location>
        <begin position="403"/>
        <end position="632"/>
    </location>
</feature>
<feature type="compositionally biased region" description="Basic and acidic residues" evidence="3">
    <location>
        <begin position="323"/>
        <end position="336"/>
    </location>
</feature>
<feature type="compositionally biased region" description="Polar residues" evidence="3">
    <location>
        <begin position="348"/>
        <end position="359"/>
    </location>
</feature>
<feature type="compositionally biased region" description="Low complexity" evidence="3">
    <location>
        <begin position="376"/>
        <end position="390"/>
    </location>
</feature>
<feature type="compositionally biased region" description="Low complexity" evidence="3">
    <location>
        <begin position="403"/>
        <end position="447"/>
    </location>
</feature>
<feature type="compositionally biased region" description="Pro residues" evidence="3">
    <location>
        <begin position="448"/>
        <end position="459"/>
    </location>
</feature>
<feature type="compositionally biased region" description="Pro residues" evidence="3">
    <location>
        <begin position="467"/>
        <end position="482"/>
    </location>
</feature>
<feature type="compositionally biased region" description="Low complexity" evidence="3">
    <location>
        <begin position="483"/>
        <end position="531"/>
    </location>
</feature>
<feature type="compositionally biased region" description="Pro residues" evidence="3">
    <location>
        <begin position="544"/>
        <end position="554"/>
    </location>
</feature>
<feature type="compositionally biased region" description="Acidic residues" evidence="3">
    <location>
        <begin position="562"/>
        <end position="578"/>
    </location>
</feature>
<feature type="compositionally biased region" description="Pro residues" evidence="3">
    <location>
        <begin position="589"/>
        <end position="605"/>
    </location>
</feature>
<feature type="glycosylation site" description="N-linked (GlcNAc...) asparagine; by host" evidence="2">
    <location>
        <position position="104"/>
    </location>
</feature>
<feature type="glycosylation site" description="N-linked (GlcNAc...) asparagine; by host" evidence="2">
    <location>
        <position position="163"/>
    </location>
</feature>
<feature type="glycosylation site" description="N-linked (GlcNAc...) asparagine; by host" evidence="2">
    <location>
        <position position="437"/>
    </location>
</feature>
<feature type="glycosylation site" description="N-linked (GlcNAc...) asparagine; by host" evidence="2">
    <location>
        <position position="512"/>
    </location>
</feature>
<keyword id="KW-0325">Glycoprotein</keyword>
<keyword id="KW-0472">Membrane</keyword>
<keyword id="KW-1185">Reference proteome</keyword>
<keyword id="KW-0732">Signal</keyword>
<keyword id="KW-0812">Transmembrane</keyword>
<keyword id="KW-1133">Transmembrane helix</keyword>
<keyword id="KW-0261">Viral envelope protein</keyword>
<keyword id="KW-0946">Virion</keyword>
<gene>
    <name type="primary">gG</name>
    <name type="ORF">US4</name>
</gene>